<proteinExistence type="inferred from homology"/>
<dbReference type="EMBL" id="CP000394">
    <property type="protein sequence ID" value="ABI60931.1"/>
    <property type="molecule type" value="Genomic_DNA"/>
</dbReference>
<dbReference type="SMR" id="Q0BW71"/>
<dbReference type="STRING" id="391165.GbCGDNIH1_0033"/>
<dbReference type="KEGG" id="gbe:GbCGDNIH1_0033"/>
<dbReference type="eggNOG" id="COG1301">
    <property type="taxonomic scope" value="Bacteria"/>
</dbReference>
<dbReference type="HOGENOM" id="CLU_019375_7_0_5"/>
<dbReference type="OrthoDB" id="9766690at2"/>
<dbReference type="Proteomes" id="UP000001963">
    <property type="component" value="Chromosome"/>
</dbReference>
<dbReference type="GO" id="GO:0005886">
    <property type="term" value="C:plasma membrane"/>
    <property type="evidence" value="ECO:0007669"/>
    <property type="project" value="UniProtKB-SubCell"/>
</dbReference>
<dbReference type="GO" id="GO:0015138">
    <property type="term" value="F:fumarate transmembrane transporter activity"/>
    <property type="evidence" value="ECO:0007669"/>
    <property type="project" value="TreeGrafter"/>
</dbReference>
<dbReference type="GO" id="GO:0015366">
    <property type="term" value="F:malate:proton symporter activity"/>
    <property type="evidence" value="ECO:0007669"/>
    <property type="project" value="TreeGrafter"/>
</dbReference>
<dbReference type="GO" id="GO:0015141">
    <property type="term" value="F:succinate transmembrane transporter activity"/>
    <property type="evidence" value="ECO:0007669"/>
    <property type="project" value="TreeGrafter"/>
</dbReference>
<dbReference type="GO" id="GO:0070778">
    <property type="term" value="P:L-aspartate transmembrane transport"/>
    <property type="evidence" value="ECO:0007669"/>
    <property type="project" value="TreeGrafter"/>
</dbReference>
<dbReference type="FunFam" id="1.10.3860.10:FF:000001">
    <property type="entry name" value="C4-dicarboxylate transport protein"/>
    <property type="match status" value="1"/>
</dbReference>
<dbReference type="Gene3D" id="1.10.3860.10">
    <property type="entry name" value="Sodium:dicarboxylate symporter"/>
    <property type="match status" value="1"/>
</dbReference>
<dbReference type="HAMAP" id="MF_01300">
    <property type="entry name" value="C4_dicarb_transport"/>
    <property type="match status" value="1"/>
</dbReference>
<dbReference type="InterPro" id="IPR023954">
    <property type="entry name" value="C4_dicarb_transport"/>
</dbReference>
<dbReference type="InterPro" id="IPR001991">
    <property type="entry name" value="Na-dicarboxylate_symporter"/>
</dbReference>
<dbReference type="InterPro" id="IPR018107">
    <property type="entry name" value="Na-dicarboxylate_symporter_CS"/>
</dbReference>
<dbReference type="InterPro" id="IPR036458">
    <property type="entry name" value="Na:dicarbo_symporter_sf"/>
</dbReference>
<dbReference type="NCBIfam" id="NF002461">
    <property type="entry name" value="PRK01663.1"/>
    <property type="match status" value="1"/>
</dbReference>
<dbReference type="PANTHER" id="PTHR42865:SF1">
    <property type="entry name" value="AEROBIC C4-DICARBOXYLATE TRANSPORT PROTEIN"/>
    <property type="match status" value="1"/>
</dbReference>
<dbReference type="PANTHER" id="PTHR42865">
    <property type="entry name" value="PROTON/GLUTAMATE-ASPARTATE SYMPORTER"/>
    <property type="match status" value="1"/>
</dbReference>
<dbReference type="Pfam" id="PF00375">
    <property type="entry name" value="SDF"/>
    <property type="match status" value="1"/>
</dbReference>
<dbReference type="PRINTS" id="PR00173">
    <property type="entry name" value="EDTRNSPORT"/>
</dbReference>
<dbReference type="SUPFAM" id="SSF118215">
    <property type="entry name" value="Proton glutamate symport protein"/>
    <property type="match status" value="1"/>
</dbReference>
<dbReference type="PROSITE" id="PS00713">
    <property type="entry name" value="NA_DICARBOXYL_SYMP_1"/>
    <property type="match status" value="1"/>
</dbReference>
<dbReference type="PROSITE" id="PS00714">
    <property type="entry name" value="NA_DICARBOXYL_SYMP_2"/>
    <property type="match status" value="1"/>
</dbReference>
<gene>
    <name evidence="1" type="primary">dctA</name>
    <name type="ordered locus">GbCGDNIH1_0033</name>
</gene>
<accession>Q0BW71</accession>
<evidence type="ECO:0000255" key="1">
    <source>
        <dbReference type="HAMAP-Rule" id="MF_01300"/>
    </source>
</evidence>
<name>DCTA_GRABC</name>
<protein>
    <recommendedName>
        <fullName evidence="1">C4-dicarboxylate transport protein</fullName>
    </recommendedName>
</protein>
<feature type="chain" id="PRO_0000321985" description="C4-dicarboxylate transport protein">
    <location>
        <begin position="1"/>
        <end position="447"/>
    </location>
</feature>
<feature type="transmembrane region" description="Helical" evidence="1">
    <location>
        <begin position="21"/>
        <end position="41"/>
    </location>
</feature>
<feature type="transmembrane region" description="Helical" evidence="1">
    <location>
        <begin position="57"/>
        <end position="77"/>
    </location>
</feature>
<feature type="transmembrane region" description="Helical" evidence="1">
    <location>
        <begin position="92"/>
        <end position="112"/>
    </location>
</feature>
<feature type="transmembrane region" description="Helical" evidence="1">
    <location>
        <begin position="141"/>
        <end position="161"/>
    </location>
</feature>
<feature type="transmembrane region" description="Helical" evidence="1">
    <location>
        <begin position="163"/>
        <end position="183"/>
    </location>
</feature>
<feature type="transmembrane region" description="Helical" evidence="1">
    <location>
        <begin position="201"/>
        <end position="221"/>
    </location>
</feature>
<feature type="transmembrane region" description="Helical" evidence="1">
    <location>
        <begin position="232"/>
        <end position="252"/>
    </location>
</feature>
<feature type="transmembrane region" description="Helical" evidence="1">
    <location>
        <begin position="320"/>
        <end position="340"/>
    </location>
</feature>
<feature type="transmembrane region" description="Helical" evidence="1">
    <location>
        <begin position="345"/>
        <end position="365"/>
    </location>
</feature>
<feature type="transmembrane region" description="Helical" evidence="1">
    <location>
        <begin position="368"/>
        <end position="388"/>
    </location>
</feature>
<reference key="1">
    <citation type="journal article" date="2007" name="J. Bacteriol.">
        <title>Genome sequence analysis of the emerging human pathogenic acetic acid bacterium Granulibacter bethesdensis.</title>
        <authorList>
            <person name="Greenberg D.E."/>
            <person name="Porcella S.F."/>
            <person name="Zelazny A.M."/>
            <person name="Virtaneva K."/>
            <person name="Sturdevant D.E."/>
            <person name="Kupko J.J. III"/>
            <person name="Barbian K.D."/>
            <person name="Babar A."/>
            <person name="Dorward D.W."/>
            <person name="Holland S.M."/>
        </authorList>
    </citation>
    <scope>NUCLEOTIDE SEQUENCE [LARGE SCALE GENOMIC DNA]</scope>
    <source>
        <strain>ATCC BAA-1260 / CGDNIH1</strain>
    </source>
</reference>
<sequence>MAMAPVSQVPQPRRPHKWYQHLYVQVLIAMALSILLGYFAPDVAKSFGPLGDAFIKLVKMIIAPVIFLTVVTGIAGMRDMKTVGRVIGKAMIYFLCFSTLALVVGLVVVNIVQPGASMHADPAKLSSSLVQTYVQRAHDTSLIGFLLNIIPATPVSALASGDILQVLFFSVLFGIALASVGEAGTPLLKVLESLSASIFRLVAILMRAAPLGAFGAMAYTVGTFGIRSILNLAMLVGTFYITAILFVLIVLGSVARYNGFSILKLIRYIKEELLLVLGTSSSEPALPGLMAKMEAAGCEKTVVGLVIPTGYSFNLDGTNIYMTIAALFIAQALNIPLSWGDQALLLAVAMLSSKGAAGVTGAGFVTLAATLSVIPSIPVAGIGLIFGVDRFMSECRALTNLIGNAVAAIVVARWEGKLDKNQLTAALNGEFGPVEAGEDLAGHVTTS</sequence>
<comment type="function">
    <text evidence="1">Responsible for the transport of dicarboxylates such as succinate, fumarate, and malate from the periplasm across the membrane.</text>
</comment>
<comment type="subcellular location">
    <subcellularLocation>
        <location evidence="1">Cell inner membrane</location>
        <topology evidence="1">Multi-pass membrane protein</topology>
    </subcellularLocation>
</comment>
<comment type="similarity">
    <text evidence="1">Belongs to the dicarboxylate/amino acid:cation symporter (DAACS) (TC 2.A.23) family.</text>
</comment>
<keyword id="KW-0997">Cell inner membrane</keyword>
<keyword id="KW-1003">Cell membrane</keyword>
<keyword id="KW-0472">Membrane</keyword>
<keyword id="KW-1185">Reference proteome</keyword>
<keyword id="KW-0769">Symport</keyword>
<keyword id="KW-0812">Transmembrane</keyword>
<keyword id="KW-1133">Transmembrane helix</keyword>
<keyword id="KW-0813">Transport</keyword>
<organism>
    <name type="scientific">Granulibacter bethesdensis (strain ATCC BAA-1260 / CGDNIH1)</name>
    <dbReference type="NCBI Taxonomy" id="391165"/>
    <lineage>
        <taxon>Bacteria</taxon>
        <taxon>Pseudomonadati</taxon>
        <taxon>Pseudomonadota</taxon>
        <taxon>Alphaproteobacteria</taxon>
        <taxon>Acetobacterales</taxon>
        <taxon>Acetobacteraceae</taxon>
        <taxon>Granulibacter</taxon>
    </lineage>
</organism>